<evidence type="ECO:0000255" key="1">
    <source>
        <dbReference type="HAMAP-Rule" id="MF_01071"/>
    </source>
</evidence>
<reference key="1">
    <citation type="journal article" date="2008" name="J. Bacteriol.">
        <title>The pangenome structure of Escherichia coli: comparative genomic analysis of E. coli commensal and pathogenic isolates.</title>
        <authorList>
            <person name="Rasko D.A."/>
            <person name="Rosovitz M.J."/>
            <person name="Myers G.S.A."/>
            <person name="Mongodin E.F."/>
            <person name="Fricke W.F."/>
            <person name="Gajer P."/>
            <person name="Crabtree J."/>
            <person name="Sebaihia M."/>
            <person name="Thomson N.R."/>
            <person name="Chaudhuri R."/>
            <person name="Henderson I.R."/>
            <person name="Sperandio V."/>
            <person name="Ravel J."/>
        </authorList>
    </citation>
    <scope>NUCLEOTIDE SEQUENCE [LARGE SCALE GENOMIC DNA]</scope>
    <source>
        <strain>E24377A / ETEC</strain>
    </source>
</reference>
<proteinExistence type="inferred from homology"/>
<accession>A7ZMU2</accession>
<protein>
    <recommendedName>
        <fullName evidence="1">UPF0266 membrane protein YobD</fullName>
    </recommendedName>
</protein>
<organism>
    <name type="scientific">Escherichia coli O139:H28 (strain E24377A / ETEC)</name>
    <dbReference type="NCBI Taxonomy" id="331111"/>
    <lineage>
        <taxon>Bacteria</taxon>
        <taxon>Pseudomonadati</taxon>
        <taxon>Pseudomonadota</taxon>
        <taxon>Gammaproteobacteria</taxon>
        <taxon>Enterobacterales</taxon>
        <taxon>Enterobacteriaceae</taxon>
        <taxon>Escherichia</taxon>
    </lineage>
</organism>
<gene>
    <name evidence="1" type="primary">yobD</name>
    <name type="ordered locus">EcE24377A_2048</name>
</gene>
<keyword id="KW-0997">Cell inner membrane</keyword>
<keyword id="KW-1003">Cell membrane</keyword>
<keyword id="KW-0472">Membrane</keyword>
<keyword id="KW-1185">Reference proteome</keyword>
<keyword id="KW-0812">Transmembrane</keyword>
<keyword id="KW-1133">Transmembrane helix</keyword>
<feature type="chain" id="PRO_1000064579" description="UPF0266 membrane protein YobD">
    <location>
        <begin position="1"/>
        <end position="152"/>
    </location>
</feature>
<feature type="transmembrane region" description="Helical" evidence="1">
    <location>
        <begin position="6"/>
        <end position="26"/>
    </location>
</feature>
<feature type="transmembrane region" description="Helical" evidence="1">
    <location>
        <begin position="45"/>
        <end position="65"/>
    </location>
</feature>
<feature type="transmembrane region" description="Helical" evidence="1">
    <location>
        <begin position="67"/>
        <end position="87"/>
    </location>
</feature>
<comment type="subcellular location">
    <subcellularLocation>
        <location evidence="1">Cell inner membrane</location>
        <topology evidence="1">Multi-pass membrane protein</topology>
    </subcellularLocation>
</comment>
<comment type="similarity">
    <text evidence="1">Belongs to the UPF0266 family.</text>
</comment>
<sequence length="152" mass="17615">MTITDLVLILFIAALLAFAIYDQFIMPRRNGPTLLAIPLLRRGRIDSVIFVGLIVILIYNNVTNHGALITTWLLSALALMGFYIFWIRVPKIIFKQKGFFFANVWIEYSRIKAMNLSEDGVLVMQLEQRRLLIRVRNIDDLEKIYKLLVSTQ</sequence>
<name>YOBD_ECO24</name>
<dbReference type="EMBL" id="CP000800">
    <property type="protein sequence ID" value="ABV20175.1"/>
    <property type="molecule type" value="Genomic_DNA"/>
</dbReference>
<dbReference type="RefSeq" id="WP_000156255.1">
    <property type="nucleotide sequence ID" value="NC_009801.1"/>
</dbReference>
<dbReference type="KEGG" id="ecw:EcE24377A_2048"/>
<dbReference type="HOGENOM" id="CLU_133645_0_0_6"/>
<dbReference type="Proteomes" id="UP000001122">
    <property type="component" value="Chromosome"/>
</dbReference>
<dbReference type="GO" id="GO:0005886">
    <property type="term" value="C:plasma membrane"/>
    <property type="evidence" value="ECO:0007669"/>
    <property type="project" value="UniProtKB-SubCell"/>
</dbReference>
<dbReference type="HAMAP" id="MF_01071">
    <property type="entry name" value="UPF0266"/>
    <property type="match status" value="1"/>
</dbReference>
<dbReference type="InterPro" id="IPR009328">
    <property type="entry name" value="DUF986"/>
</dbReference>
<dbReference type="NCBIfam" id="NF002791">
    <property type="entry name" value="PRK02913.1"/>
    <property type="match status" value="1"/>
</dbReference>
<dbReference type="Pfam" id="PF06173">
    <property type="entry name" value="DUF986"/>
    <property type="match status" value="1"/>
</dbReference>
<dbReference type="PIRSF" id="PIRSF020687">
    <property type="entry name" value="UCP020687"/>
    <property type="match status" value="1"/>
</dbReference>